<accession>Q8Z1Y2</accession>
<feature type="chain" id="PRO_0000214889" description="Protein TusC">
    <location>
        <begin position="1"/>
        <end position="118"/>
    </location>
</feature>
<gene>
    <name evidence="1" type="primary">tusC</name>
    <name type="ordered locus">STY4348</name>
    <name type="ordered locus">t4055</name>
</gene>
<sequence length="118" mass="13010">MKRIAFVFSTAPHGSASGREGLDALLATSALTEALGVFFISDGVFQLLPGQKPDAVLARDYIATFKLFDLYDIDQCWICAASLRERGLENVNFVVNATPLEPVALRRELGNYDVILRF</sequence>
<name>TUSC_SALTI</name>
<organism>
    <name type="scientific">Salmonella typhi</name>
    <dbReference type="NCBI Taxonomy" id="90370"/>
    <lineage>
        <taxon>Bacteria</taxon>
        <taxon>Pseudomonadati</taxon>
        <taxon>Pseudomonadota</taxon>
        <taxon>Gammaproteobacteria</taxon>
        <taxon>Enterobacterales</taxon>
        <taxon>Enterobacteriaceae</taxon>
        <taxon>Salmonella</taxon>
    </lineage>
</organism>
<keyword id="KW-0963">Cytoplasm</keyword>
<keyword id="KW-0819">tRNA processing</keyword>
<comment type="function">
    <text evidence="1">Part of a sulfur-relay system required for 2-thiolation of 5-methylaminomethyl-2-thiouridine (mnm(5)s(2)U) at tRNA wobble positions.</text>
</comment>
<comment type="subunit">
    <text evidence="1">Heterohexamer, formed by a dimer of trimers. The hexameric TusBCD complex contains 2 copies each of TusB, TusC and TusD. The TusBCD complex interacts with TusE.</text>
</comment>
<comment type="subcellular location">
    <subcellularLocation>
        <location evidence="1">Cytoplasm</location>
    </subcellularLocation>
</comment>
<comment type="similarity">
    <text evidence="1">Belongs to the DsrF/TusC family.</text>
</comment>
<evidence type="ECO:0000255" key="1">
    <source>
        <dbReference type="HAMAP-Rule" id="MF_00389"/>
    </source>
</evidence>
<protein>
    <recommendedName>
        <fullName evidence="1">Protein TusC</fullName>
    </recommendedName>
    <alternativeName>
        <fullName evidence="1">tRNA 2-thiouridine synthesizing protein C</fullName>
    </alternativeName>
</protein>
<proteinExistence type="inferred from homology"/>
<reference key="1">
    <citation type="journal article" date="2001" name="Nature">
        <title>Complete genome sequence of a multiple drug resistant Salmonella enterica serovar Typhi CT18.</title>
        <authorList>
            <person name="Parkhill J."/>
            <person name="Dougan G."/>
            <person name="James K.D."/>
            <person name="Thomson N.R."/>
            <person name="Pickard D."/>
            <person name="Wain J."/>
            <person name="Churcher C.M."/>
            <person name="Mungall K.L."/>
            <person name="Bentley S.D."/>
            <person name="Holden M.T.G."/>
            <person name="Sebaihia M."/>
            <person name="Baker S."/>
            <person name="Basham D."/>
            <person name="Brooks K."/>
            <person name="Chillingworth T."/>
            <person name="Connerton P."/>
            <person name="Cronin A."/>
            <person name="Davis P."/>
            <person name="Davies R.M."/>
            <person name="Dowd L."/>
            <person name="White N."/>
            <person name="Farrar J."/>
            <person name="Feltwell T."/>
            <person name="Hamlin N."/>
            <person name="Haque A."/>
            <person name="Hien T.T."/>
            <person name="Holroyd S."/>
            <person name="Jagels K."/>
            <person name="Krogh A."/>
            <person name="Larsen T.S."/>
            <person name="Leather S."/>
            <person name="Moule S."/>
            <person name="O'Gaora P."/>
            <person name="Parry C."/>
            <person name="Quail M.A."/>
            <person name="Rutherford K.M."/>
            <person name="Simmonds M."/>
            <person name="Skelton J."/>
            <person name="Stevens K."/>
            <person name="Whitehead S."/>
            <person name="Barrell B.G."/>
        </authorList>
    </citation>
    <scope>NUCLEOTIDE SEQUENCE [LARGE SCALE GENOMIC DNA]</scope>
    <source>
        <strain>CT18</strain>
    </source>
</reference>
<reference key="2">
    <citation type="journal article" date="2003" name="J. Bacteriol.">
        <title>Comparative genomics of Salmonella enterica serovar Typhi strains Ty2 and CT18.</title>
        <authorList>
            <person name="Deng W."/>
            <person name="Liou S.-R."/>
            <person name="Plunkett G. III"/>
            <person name="Mayhew G.F."/>
            <person name="Rose D.J."/>
            <person name="Burland V."/>
            <person name="Kodoyianni V."/>
            <person name="Schwartz D.C."/>
            <person name="Blattner F.R."/>
        </authorList>
    </citation>
    <scope>NUCLEOTIDE SEQUENCE [LARGE SCALE GENOMIC DNA]</scope>
    <source>
        <strain>ATCC 700931 / Ty2</strain>
    </source>
</reference>
<dbReference type="EMBL" id="AL513382">
    <property type="protein sequence ID" value="CAD08163.1"/>
    <property type="molecule type" value="Genomic_DNA"/>
</dbReference>
<dbReference type="EMBL" id="AE014613">
    <property type="protein sequence ID" value="AAO71522.1"/>
    <property type="molecule type" value="Genomic_DNA"/>
</dbReference>
<dbReference type="RefSeq" id="NP_458450.1">
    <property type="nucleotide sequence ID" value="NC_003198.1"/>
</dbReference>
<dbReference type="RefSeq" id="WP_000820707.1">
    <property type="nucleotide sequence ID" value="NZ_WSUR01000001.1"/>
</dbReference>
<dbReference type="SMR" id="Q8Z1Y2"/>
<dbReference type="STRING" id="220341.gene:17588176"/>
<dbReference type="KEGG" id="stt:t4055"/>
<dbReference type="KEGG" id="sty:STY4348"/>
<dbReference type="PATRIC" id="fig|220341.7.peg.4443"/>
<dbReference type="eggNOG" id="COG2923">
    <property type="taxonomic scope" value="Bacteria"/>
</dbReference>
<dbReference type="HOGENOM" id="CLU_155943_1_0_6"/>
<dbReference type="OMA" id="EMILIMA"/>
<dbReference type="OrthoDB" id="9789418at2"/>
<dbReference type="Proteomes" id="UP000000541">
    <property type="component" value="Chromosome"/>
</dbReference>
<dbReference type="Proteomes" id="UP000002670">
    <property type="component" value="Chromosome"/>
</dbReference>
<dbReference type="GO" id="GO:0005737">
    <property type="term" value="C:cytoplasm"/>
    <property type="evidence" value="ECO:0007669"/>
    <property type="project" value="UniProtKB-SubCell"/>
</dbReference>
<dbReference type="GO" id="GO:0008033">
    <property type="term" value="P:tRNA processing"/>
    <property type="evidence" value="ECO:0007669"/>
    <property type="project" value="UniProtKB-UniRule"/>
</dbReference>
<dbReference type="Gene3D" id="3.40.1260.10">
    <property type="entry name" value="DsrEFH-like"/>
    <property type="match status" value="1"/>
</dbReference>
<dbReference type="HAMAP" id="MF_00389">
    <property type="entry name" value="Thiourid_synth_C"/>
    <property type="match status" value="1"/>
</dbReference>
<dbReference type="InterPro" id="IPR027396">
    <property type="entry name" value="DsrEFH-like"/>
</dbReference>
<dbReference type="InterPro" id="IPR003787">
    <property type="entry name" value="Sulphur_relay_DsrE/F-like"/>
</dbReference>
<dbReference type="InterPro" id="IPR037450">
    <property type="entry name" value="Sulphur_relay_TusC"/>
</dbReference>
<dbReference type="InterPro" id="IPR017462">
    <property type="entry name" value="Sulphur_relay_TusC/DsrF"/>
</dbReference>
<dbReference type="NCBIfam" id="NF001238">
    <property type="entry name" value="PRK00211.1"/>
    <property type="match status" value="1"/>
</dbReference>
<dbReference type="NCBIfam" id="TIGR03010">
    <property type="entry name" value="sulf_tusC_dsrF"/>
    <property type="match status" value="1"/>
</dbReference>
<dbReference type="PANTHER" id="PTHR38780">
    <property type="entry name" value="PROTEIN TUSC"/>
    <property type="match status" value="1"/>
</dbReference>
<dbReference type="PANTHER" id="PTHR38780:SF1">
    <property type="entry name" value="PROTEIN TUSC"/>
    <property type="match status" value="1"/>
</dbReference>
<dbReference type="Pfam" id="PF02635">
    <property type="entry name" value="DsrE"/>
    <property type="match status" value="1"/>
</dbReference>
<dbReference type="SUPFAM" id="SSF75169">
    <property type="entry name" value="DsrEFH-like"/>
    <property type="match status" value="1"/>
</dbReference>